<comment type="function">
    <text evidence="1">Together with its co-chaperonin GroES, plays an essential role in assisting protein folding. The GroEL-GroES system forms a nano-cage that allows encapsulation of the non-native substrate proteins and provides a physical environment optimized to promote and accelerate protein folding.</text>
</comment>
<comment type="catalytic activity">
    <reaction evidence="1">
        <text>ATP + H2O + a folded polypeptide = ADP + phosphate + an unfolded polypeptide.</text>
        <dbReference type="EC" id="5.6.1.7"/>
    </reaction>
</comment>
<comment type="subunit">
    <text evidence="1">Forms a cylinder of 14 subunits composed of two heptameric rings stacked back-to-back. Interacts with the co-chaperonin GroES.</text>
</comment>
<comment type="subcellular location">
    <subcellularLocation>
        <location evidence="1">Cytoplasm</location>
    </subcellularLocation>
</comment>
<comment type="similarity">
    <text evidence="1">Belongs to the chaperonin (HSP60) family.</text>
</comment>
<accession>Q9ANR9</accession>
<name>CH60_WIGBR</name>
<keyword id="KW-0067">ATP-binding</keyword>
<keyword id="KW-0143">Chaperone</keyword>
<keyword id="KW-0963">Cytoplasm</keyword>
<keyword id="KW-0413">Isomerase</keyword>
<keyword id="KW-0547">Nucleotide-binding</keyword>
<keyword id="KW-1185">Reference proteome</keyword>
<evidence type="ECO:0000255" key="1">
    <source>
        <dbReference type="HAMAP-Rule" id="MF_00600"/>
    </source>
</evidence>
<evidence type="ECO:0000256" key="2">
    <source>
        <dbReference type="SAM" id="MobiDB-lite"/>
    </source>
</evidence>
<sequence>MAAKDVKFGNDARSKMLRGVNVLADAVKVTLGPKGRNVVLDKSFGSPMITKDGVSVAREVELEDKFENMGAQMLKEVASKANDAAGDGTTTATVLAQSIVNEGLKAVAAGMNPMDLKRGIDKAVIGAVAELKKLSVPCSDSKSIAQVGTISANADKTVGTLIAEAMEKVGKEGVITVEEGSGLQDELDVVEGMQFDRGYLSPYFVNKPEARSVELDNPFILLSDKKISNIREMLPILESVAKAGKPLLIIAEDVEGEALATLVVNNMRGIVKVAAVKAPGFGDRRKAMLQDIAILTSGTVISEEMGLDLEKSTLEDMGQAKRVVITKDTTTIIDGTGNKSMISSRVSQINQERDEATSDYDKEKLQERVAKLAGGVAVIKVGAATEVEMKEKKARVEDALHATRAAVEEGVVAGGGVALIRVANRIVNLRGENEDQNVGIRVARRAMEAPLRQIVANAGEEPSVIANKVKAGEGNTGYNAATEVYGNMIDMGILDPTKVTRSALQYAASIAGLMITTECMITDLPKEEKPDLSGAGAGMGGMGGMM</sequence>
<reference key="1">
    <citation type="journal article" date="2001" name="J. Bacteriol.">
        <title>Genome size determination and coding capacity of Sodalis glossinidius, an enteric symbiont of tsetse flies, as revealed by hybridization to Escherichia coli gene arrays.</title>
        <authorList>
            <person name="Akman L."/>
            <person name="Rio R.V.M."/>
            <person name="Beard C.B."/>
            <person name="Aksoy S."/>
        </authorList>
    </citation>
    <scope>NUCLEOTIDE SEQUENCE [GENOMIC DNA]</scope>
</reference>
<reference key="2">
    <citation type="journal article" date="2002" name="Nat. Genet.">
        <title>Genome sequence of the endocellular obligate symbiont of tsetse flies, Wigglesworthia glossinidia.</title>
        <authorList>
            <person name="Akman L."/>
            <person name="Yamashita A."/>
            <person name="Watanabe H."/>
            <person name="Oshima K."/>
            <person name="Shiba T."/>
            <person name="Hattori M."/>
            <person name="Aksoy S."/>
        </authorList>
    </citation>
    <scope>NUCLEOTIDE SEQUENCE [LARGE SCALE GENOMIC DNA]</scope>
</reference>
<gene>
    <name evidence="1" type="primary">groEL</name>
    <name evidence="1" type="synonym">groL</name>
    <name type="synonym">mopA</name>
    <name type="ordered locus">WIGBR2580</name>
</gene>
<feature type="chain" id="PRO_0000063612" description="Chaperonin GroEL">
    <location>
        <begin position="1"/>
        <end position="546"/>
    </location>
</feature>
<feature type="region of interest" description="Disordered" evidence="2">
    <location>
        <begin position="526"/>
        <end position="546"/>
    </location>
</feature>
<feature type="compositionally biased region" description="Gly residues" evidence="2">
    <location>
        <begin position="535"/>
        <end position="546"/>
    </location>
</feature>
<feature type="binding site" evidence="1">
    <location>
        <begin position="30"/>
        <end position="33"/>
    </location>
    <ligand>
        <name>ATP</name>
        <dbReference type="ChEBI" id="CHEBI:30616"/>
    </ligand>
</feature>
<feature type="binding site" evidence="1">
    <location>
        <position position="51"/>
    </location>
    <ligand>
        <name>ATP</name>
        <dbReference type="ChEBI" id="CHEBI:30616"/>
    </ligand>
</feature>
<feature type="binding site" evidence="1">
    <location>
        <begin position="87"/>
        <end position="91"/>
    </location>
    <ligand>
        <name>ATP</name>
        <dbReference type="ChEBI" id="CHEBI:30616"/>
    </ligand>
</feature>
<feature type="binding site" evidence="1">
    <location>
        <position position="415"/>
    </location>
    <ligand>
        <name>ATP</name>
        <dbReference type="ChEBI" id="CHEBI:30616"/>
    </ligand>
</feature>
<feature type="binding site" evidence="1">
    <location>
        <begin position="479"/>
        <end position="481"/>
    </location>
    <ligand>
        <name>ATP</name>
        <dbReference type="ChEBI" id="CHEBI:30616"/>
    </ligand>
</feature>
<feature type="binding site" evidence="1">
    <location>
        <position position="495"/>
    </location>
    <ligand>
        <name>ATP</name>
        <dbReference type="ChEBI" id="CHEBI:30616"/>
    </ligand>
</feature>
<organism>
    <name type="scientific">Wigglesworthia glossinidia brevipalpis</name>
    <dbReference type="NCBI Taxonomy" id="36870"/>
    <lineage>
        <taxon>Bacteria</taxon>
        <taxon>Pseudomonadati</taxon>
        <taxon>Pseudomonadota</taxon>
        <taxon>Gammaproteobacteria</taxon>
        <taxon>Enterobacterales</taxon>
        <taxon>Erwiniaceae</taxon>
        <taxon>Wigglesworthia</taxon>
    </lineage>
</organism>
<protein>
    <recommendedName>
        <fullName evidence="1">Chaperonin GroEL</fullName>
        <ecNumber evidence="1">5.6.1.7</ecNumber>
    </recommendedName>
    <alternativeName>
        <fullName evidence="1">60 kDa chaperonin</fullName>
    </alternativeName>
    <alternativeName>
        <fullName evidence="1">Chaperonin-60</fullName>
        <shortName evidence="1">Cpn60</shortName>
    </alternativeName>
</protein>
<dbReference type="EC" id="5.6.1.7" evidence="1"/>
<dbReference type="EMBL" id="AF321516">
    <property type="protein sequence ID" value="AAK07427.1"/>
    <property type="molecule type" value="Genomic_DNA"/>
</dbReference>
<dbReference type="EMBL" id="BA000021">
    <property type="protein sequence ID" value="BAC24404.1"/>
    <property type="molecule type" value="Genomic_DNA"/>
</dbReference>
<dbReference type="SMR" id="Q9ANR9"/>
<dbReference type="STRING" id="36870.gene:10368751"/>
<dbReference type="KEGG" id="wbr:mopA"/>
<dbReference type="eggNOG" id="COG0459">
    <property type="taxonomic scope" value="Bacteria"/>
</dbReference>
<dbReference type="HOGENOM" id="CLU_016503_3_0_6"/>
<dbReference type="OrthoDB" id="9766614at2"/>
<dbReference type="Proteomes" id="UP000000562">
    <property type="component" value="Chromosome"/>
</dbReference>
<dbReference type="GO" id="GO:0005737">
    <property type="term" value="C:cytoplasm"/>
    <property type="evidence" value="ECO:0007669"/>
    <property type="project" value="UniProtKB-SubCell"/>
</dbReference>
<dbReference type="GO" id="GO:0005524">
    <property type="term" value="F:ATP binding"/>
    <property type="evidence" value="ECO:0007669"/>
    <property type="project" value="UniProtKB-UniRule"/>
</dbReference>
<dbReference type="GO" id="GO:0140662">
    <property type="term" value="F:ATP-dependent protein folding chaperone"/>
    <property type="evidence" value="ECO:0007669"/>
    <property type="project" value="InterPro"/>
</dbReference>
<dbReference type="GO" id="GO:0016853">
    <property type="term" value="F:isomerase activity"/>
    <property type="evidence" value="ECO:0007669"/>
    <property type="project" value="UniProtKB-KW"/>
</dbReference>
<dbReference type="GO" id="GO:0051082">
    <property type="term" value="F:unfolded protein binding"/>
    <property type="evidence" value="ECO:0007669"/>
    <property type="project" value="UniProtKB-UniRule"/>
</dbReference>
<dbReference type="GO" id="GO:0042026">
    <property type="term" value="P:protein refolding"/>
    <property type="evidence" value="ECO:0007669"/>
    <property type="project" value="UniProtKB-UniRule"/>
</dbReference>
<dbReference type="CDD" id="cd03344">
    <property type="entry name" value="GroEL"/>
    <property type="match status" value="1"/>
</dbReference>
<dbReference type="FunFam" id="1.10.560.10:FF:000001">
    <property type="entry name" value="60 kDa chaperonin"/>
    <property type="match status" value="1"/>
</dbReference>
<dbReference type="FunFam" id="3.50.7.10:FF:000001">
    <property type="entry name" value="60 kDa chaperonin"/>
    <property type="match status" value="1"/>
</dbReference>
<dbReference type="Gene3D" id="3.50.7.10">
    <property type="entry name" value="GroEL"/>
    <property type="match status" value="1"/>
</dbReference>
<dbReference type="Gene3D" id="1.10.560.10">
    <property type="entry name" value="GroEL-like equatorial domain"/>
    <property type="match status" value="1"/>
</dbReference>
<dbReference type="Gene3D" id="3.30.260.10">
    <property type="entry name" value="TCP-1-like chaperonin intermediate domain"/>
    <property type="match status" value="1"/>
</dbReference>
<dbReference type="HAMAP" id="MF_00600">
    <property type="entry name" value="CH60"/>
    <property type="match status" value="1"/>
</dbReference>
<dbReference type="InterPro" id="IPR018370">
    <property type="entry name" value="Chaperonin_Cpn60_CS"/>
</dbReference>
<dbReference type="InterPro" id="IPR001844">
    <property type="entry name" value="Cpn60/GroEL"/>
</dbReference>
<dbReference type="InterPro" id="IPR002423">
    <property type="entry name" value="Cpn60/GroEL/TCP-1"/>
</dbReference>
<dbReference type="InterPro" id="IPR027409">
    <property type="entry name" value="GroEL-like_apical_dom_sf"/>
</dbReference>
<dbReference type="InterPro" id="IPR027413">
    <property type="entry name" value="GROEL-like_equatorial_sf"/>
</dbReference>
<dbReference type="InterPro" id="IPR027410">
    <property type="entry name" value="TCP-1-like_intermed_sf"/>
</dbReference>
<dbReference type="NCBIfam" id="TIGR02348">
    <property type="entry name" value="GroEL"/>
    <property type="match status" value="1"/>
</dbReference>
<dbReference type="NCBIfam" id="NF000592">
    <property type="entry name" value="PRK00013.1"/>
    <property type="match status" value="1"/>
</dbReference>
<dbReference type="NCBIfam" id="NF009487">
    <property type="entry name" value="PRK12849.1"/>
    <property type="match status" value="1"/>
</dbReference>
<dbReference type="NCBIfam" id="NF009488">
    <property type="entry name" value="PRK12850.1"/>
    <property type="match status" value="1"/>
</dbReference>
<dbReference type="NCBIfam" id="NF009489">
    <property type="entry name" value="PRK12851.1"/>
    <property type="match status" value="1"/>
</dbReference>
<dbReference type="PANTHER" id="PTHR45633">
    <property type="entry name" value="60 KDA HEAT SHOCK PROTEIN, MITOCHONDRIAL"/>
    <property type="match status" value="1"/>
</dbReference>
<dbReference type="Pfam" id="PF00118">
    <property type="entry name" value="Cpn60_TCP1"/>
    <property type="match status" value="1"/>
</dbReference>
<dbReference type="PRINTS" id="PR00298">
    <property type="entry name" value="CHAPERONIN60"/>
</dbReference>
<dbReference type="SUPFAM" id="SSF52029">
    <property type="entry name" value="GroEL apical domain-like"/>
    <property type="match status" value="1"/>
</dbReference>
<dbReference type="SUPFAM" id="SSF48592">
    <property type="entry name" value="GroEL equatorial domain-like"/>
    <property type="match status" value="1"/>
</dbReference>
<dbReference type="SUPFAM" id="SSF54849">
    <property type="entry name" value="GroEL-intermediate domain like"/>
    <property type="match status" value="1"/>
</dbReference>
<dbReference type="PROSITE" id="PS00296">
    <property type="entry name" value="CHAPERONINS_CPN60"/>
    <property type="match status" value="1"/>
</dbReference>
<proteinExistence type="inferred from homology"/>